<evidence type="ECO:0000255" key="1">
    <source>
        <dbReference type="HAMAP-Rule" id="MF_00009"/>
    </source>
</evidence>
<reference key="1">
    <citation type="submission" date="2007-12" db="EMBL/GenBank/DDBJ databases">
        <title>Brucella suis ATCC 23445 whole genome shotgun sequencing project.</title>
        <authorList>
            <person name="Setubal J.C."/>
            <person name="Bowns C."/>
            <person name="Boyle S."/>
            <person name="Crasta O.R."/>
            <person name="Czar M.J."/>
            <person name="Dharmanolla C."/>
            <person name="Gillespie J.J."/>
            <person name="Kenyon R.W."/>
            <person name="Lu J."/>
            <person name="Mane S."/>
            <person name="Mohapatra S."/>
            <person name="Nagrani S."/>
            <person name="Purkayastha A."/>
            <person name="Rajasimha H.K."/>
            <person name="Shallom J.M."/>
            <person name="Shallom S."/>
            <person name="Shukla M."/>
            <person name="Snyder E.E."/>
            <person name="Sobral B.W."/>
            <person name="Wattam A.R."/>
            <person name="Will R."/>
            <person name="Williams K."/>
            <person name="Yoo H."/>
            <person name="Bruce D."/>
            <person name="Detter C."/>
            <person name="Munk C."/>
            <person name="Brettin T.S."/>
        </authorList>
    </citation>
    <scope>NUCLEOTIDE SEQUENCE [LARGE SCALE GENOMIC DNA]</scope>
    <source>
        <strain>ATCC 23445 / NCTC 10510</strain>
    </source>
</reference>
<organism>
    <name type="scientific">Brucella suis (strain ATCC 23445 / NCTC 10510)</name>
    <dbReference type="NCBI Taxonomy" id="470137"/>
    <lineage>
        <taxon>Bacteria</taxon>
        <taxon>Pseudomonadati</taxon>
        <taxon>Pseudomonadota</taxon>
        <taxon>Alphaproteobacteria</taxon>
        <taxon>Hyphomicrobiales</taxon>
        <taxon>Brucellaceae</taxon>
        <taxon>Brucella/Ochrobactrum group</taxon>
        <taxon>Brucella</taxon>
    </lineage>
</organism>
<name>YBEY_BRUSI</name>
<proteinExistence type="inferred from homology"/>
<protein>
    <recommendedName>
        <fullName evidence="1">Endoribonuclease YbeY</fullName>
        <ecNumber evidence="1">3.1.-.-</ecNumber>
    </recommendedName>
</protein>
<keyword id="KW-0963">Cytoplasm</keyword>
<keyword id="KW-0255">Endonuclease</keyword>
<keyword id="KW-0378">Hydrolase</keyword>
<keyword id="KW-0479">Metal-binding</keyword>
<keyword id="KW-0540">Nuclease</keyword>
<keyword id="KW-0690">Ribosome biogenesis</keyword>
<keyword id="KW-0698">rRNA processing</keyword>
<keyword id="KW-0862">Zinc</keyword>
<accession>B0CK02</accession>
<comment type="function">
    <text evidence="1">Single strand-specific metallo-endoribonuclease involved in late-stage 70S ribosome quality control and in maturation of the 3' terminus of the 16S rRNA.</text>
</comment>
<comment type="cofactor">
    <cofactor evidence="1">
        <name>Zn(2+)</name>
        <dbReference type="ChEBI" id="CHEBI:29105"/>
    </cofactor>
    <text evidence="1">Binds 1 zinc ion.</text>
</comment>
<comment type="subcellular location">
    <subcellularLocation>
        <location evidence="1">Cytoplasm</location>
    </subcellularLocation>
</comment>
<comment type="similarity">
    <text evidence="1">Belongs to the endoribonuclease YbeY family.</text>
</comment>
<gene>
    <name evidence="1" type="primary">ybeY</name>
    <name type="ordered locus">BSUIS_A1993</name>
</gene>
<feature type="chain" id="PRO_1000073896" description="Endoribonuclease YbeY">
    <location>
        <begin position="1"/>
        <end position="168"/>
    </location>
</feature>
<feature type="binding site" evidence="1">
    <location>
        <position position="122"/>
    </location>
    <ligand>
        <name>Zn(2+)</name>
        <dbReference type="ChEBI" id="CHEBI:29105"/>
        <note>catalytic</note>
    </ligand>
</feature>
<feature type="binding site" evidence="1">
    <location>
        <position position="126"/>
    </location>
    <ligand>
        <name>Zn(2+)</name>
        <dbReference type="ChEBI" id="CHEBI:29105"/>
        <note>catalytic</note>
    </ligand>
</feature>
<feature type="binding site" evidence="1">
    <location>
        <position position="132"/>
    </location>
    <ligand>
        <name>Zn(2+)</name>
        <dbReference type="ChEBI" id="CHEBI:29105"/>
        <note>catalytic</note>
    </ligand>
</feature>
<sequence length="168" mass="18423">MSDNAIHIDIMIEAGNWPDEASLESLVSKSVAAAWNNLGLKSATSELSVVFTDDASIQLLNGEWRGKDKPTNVLSFPAFPVKAGSQPGPMLGDIVIARETVEREAKEEGKPIENHLSHLVVHGFLHLLGYDHETDEEAEVMEAREREILHALAIPDPYAVSDEDINND</sequence>
<dbReference type="EC" id="3.1.-.-" evidence="1"/>
<dbReference type="EMBL" id="CP000911">
    <property type="protein sequence ID" value="ABY39003.1"/>
    <property type="molecule type" value="Genomic_DNA"/>
</dbReference>
<dbReference type="SMR" id="B0CK02"/>
<dbReference type="KEGG" id="bmt:BSUIS_A1993"/>
<dbReference type="HOGENOM" id="CLU_106710_0_0_5"/>
<dbReference type="Proteomes" id="UP000008545">
    <property type="component" value="Chromosome I"/>
</dbReference>
<dbReference type="GO" id="GO:0005737">
    <property type="term" value="C:cytoplasm"/>
    <property type="evidence" value="ECO:0007669"/>
    <property type="project" value="UniProtKB-SubCell"/>
</dbReference>
<dbReference type="GO" id="GO:0004222">
    <property type="term" value="F:metalloendopeptidase activity"/>
    <property type="evidence" value="ECO:0007669"/>
    <property type="project" value="InterPro"/>
</dbReference>
<dbReference type="GO" id="GO:0004521">
    <property type="term" value="F:RNA endonuclease activity"/>
    <property type="evidence" value="ECO:0007669"/>
    <property type="project" value="UniProtKB-UniRule"/>
</dbReference>
<dbReference type="GO" id="GO:0008270">
    <property type="term" value="F:zinc ion binding"/>
    <property type="evidence" value="ECO:0007669"/>
    <property type="project" value="UniProtKB-UniRule"/>
</dbReference>
<dbReference type="GO" id="GO:0006364">
    <property type="term" value="P:rRNA processing"/>
    <property type="evidence" value="ECO:0007669"/>
    <property type="project" value="UniProtKB-UniRule"/>
</dbReference>
<dbReference type="Gene3D" id="3.40.390.30">
    <property type="entry name" value="Metalloproteases ('zincins'), catalytic domain"/>
    <property type="match status" value="1"/>
</dbReference>
<dbReference type="HAMAP" id="MF_00009">
    <property type="entry name" value="Endoribonucl_YbeY"/>
    <property type="match status" value="1"/>
</dbReference>
<dbReference type="InterPro" id="IPR023091">
    <property type="entry name" value="MetalPrtase_cat_dom_sf_prd"/>
</dbReference>
<dbReference type="InterPro" id="IPR002036">
    <property type="entry name" value="YbeY"/>
</dbReference>
<dbReference type="InterPro" id="IPR020549">
    <property type="entry name" value="YbeY_CS"/>
</dbReference>
<dbReference type="NCBIfam" id="TIGR00043">
    <property type="entry name" value="rRNA maturation RNase YbeY"/>
    <property type="match status" value="1"/>
</dbReference>
<dbReference type="PANTHER" id="PTHR46986">
    <property type="entry name" value="ENDORIBONUCLEASE YBEY, CHLOROPLASTIC"/>
    <property type="match status" value="1"/>
</dbReference>
<dbReference type="PANTHER" id="PTHR46986:SF1">
    <property type="entry name" value="ENDORIBONUCLEASE YBEY, CHLOROPLASTIC"/>
    <property type="match status" value="1"/>
</dbReference>
<dbReference type="Pfam" id="PF02130">
    <property type="entry name" value="YbeY"/>
    <property type="match status" value="1"/>
</dbReference>
<dbReference type="SUPFAM" id="SSF55486">
    <property type="entry name" value="Metalloproteases ('zincins'), catalytic domain"/>
    <property type="match status" value="1"/>
</dbReference>
<dbReference type="PROSITE" id="PS01306">
    <property type="entry name" value="UPF0054"/>
    <property type="match status" value="1"/>
</dbReference>